<feature type="chain" id="PRO_1000118091" description="Probable endonuclease 4">
    <location>
        <begin position="1"/>
        <end position="298"/>
    </location>
</feature>
<feature type="binding site" evidence="1">
    <location>
        <position position="69"/>
    </location>
    <ligand>
        <name>Zn(2+)</name>
        <dbReference type="ChEBI" id="CHEBI:29105"/>
        <label>1</label>
    </ligand>
</feature>
<feature type="binding site" evidence="1">
    <location>
        <position position="111"/>
    </location>
    <ligand>
        <name>Zn(2+)</name>
        <dbReference type="ChEBI" id="CHEBI:29105"/>
        <label>1</label>
    </ligand>
</feature>
<feature type="binding site" evidence="1">
    <location>
        <position position="146"/>
    </location>
    <ligand>
        <name>Zn(2+)</name>
        <dbReference type="ChEBI" id="CHEBI:29105"/>
        <label>1</label>
    </ligand>
</feature>
<feature type="binding site" evidence="1">
    <location>
        <position position="146"/>
    </location>
    <ligand>
        <name>Zn(2+)</name>
        <dbReference type="ChEBI" id="CHEBI:29105"/>
        <label>2</label>
    </ligand>
</feature>
<feature type="binding site" evidence="1">
    <location>
        <position position="180"/>
    </location>
    <ligand>
        <name>Zn(2+)</name>
        <dbReference type="ChEBI" id="CHEBI:29105"/>
        <label>2</label>
    </ligand>
</feature>
<feature type="binding site" evidence="1">
    <location>
        <position position="183"/>
    </location>
    <ligand>
        <name>Zn(2+)</name>
        <dbReference type="ChEBI" id="CHEBI:29105"/>
        <label>3</label>
    </ligand>
</feature>
<feature type="binding site" evidence="1">
    <location>
        <position position="215"/>
    </location>
    <ligand>
        <name>Zn(2+)</name>
        <dbReference type="ChEBI" id="CHEBI:29105"/>
        <label>2</label>
    </ligand>
</feature>
<feature type="binding site" evidence="1">
    <location>
        <position position="228"/>
    </location>
    <ligand>
        <name>Zn(2+)</name>
        <dbReference type="ChEBI" id="CHEBI:29105"/>
        <label>3</label>
    </ligand>
</feature>
<feature type="binding site" evidence="1">
    <location>
        <position position="230"/>
    </location>
    <ligand>
        <name>Zn(2+)</name>
        <dbReference type="ChEBI" id="CHEBI:29105"/>
        <label>3</label>
    </ligand>
</feature>
<feature type="binding site" evidence="1">
    <location>
        <position position="260"/>
    </location>
    <ligand>
        <name>Zn(2+)</name>
        <dbReference type="ChEBI" id="CHEBI:29105"/>
        <label>2</label>
    </ligand>
</feature>
<gene>
    <name evidence="1" type="primary">nfo</name>
    <name type="ordered locus">BCB4264_A4402</name>
</gene>
<protein>
    <recommendedName>
        <fullName evidence="1">Probable endonuclease 4</fullName>
        <ecNumber evidence="1">3.1.21.2</ecNumber>
    </recommendedName>
    <alternativeName>
        <fullName evidence="1">Endodeoxyribonuclease IV</fullName>
    </alternativeName>
    <alternativeName>
        <fullName evidence="1">Endonuclease IV</fullName>
    </alternativeName>
</protein>
<reference key="1">
    <citation type="submission" date="2008-10" db="EMBL/GenBank/DDBJ databases">
        <title>Genome sequence of Bacillus cereus B4264.</title>
        <authorList>
            <person name="Dodson R.J."/>
            <person name="Durkin A.S."/>
            <person name="Rosovitz M.J."/>
            <person name="Rasko D.A."/>
            <person name="Hoffmaster A."/>
            <person name="Ravel J."/>
            <person name="Sutton G."/>
        </authorList>
    </citation>
    <scope>NUCLEOTIDE SEQUENCE [LARGE SCALE GENOMIC DNA]</scope>
    <source>
        <strain>B4264</strain>
    </source>
</reference>
<proteinExistence type="inferred from homology"/>
<evidence type="ECO:0000255" key="1">
    <source>
        <dbReference type="HAMAP-Rule" id="MF_00152"/>
    </source>
</evidence>
<sequence>MLKIGSHVSMSGKKMLLAASEEAVSYGATTFMIYTGAPQNTRRKPIEELNIEAGRKHMELNGIEEIIVHAPYIINVGNTTKPETFQLGVDFLRMEIERTSALGVAKQIVLHPGAHVGAGADAGIQQIIKGLNEVLTPEQTVNIALETMAGKGTECGRSFEEIAKIIDGVKYNEKLSVCFDTCHTHDAGYDIVNDFDGVLNEFDKIVGIDRLQVLHINDSKNVRGAGKDRHENIGFGHIGYKALHHIVHHPQLMHVPKILETPYVGEDKKDKKPPYKLEIEMLKNGTFDEGLLEKIKAQ</sequence>
<accession>B7HCQ9</accession>
<dbReference type="EC" id="3.1.21.2" evidence="1"/>
<dbReference type="EMBL" id="CP001176">
    <property type="protein sequence ID" value="ACK60131.1"/>
    <property type="molecule type" value="Genomic_DNA"/>
</dbReference>
<dbReference type="RefSeq" id="WP_000912460.1">
    <property type="nucleotide sequence ID" value="NC_011725.1"/>
</dbReference>
<dbReference type="SMR" id="B7HCQ9"/>
<dbReference type="KEGG" id="bcb:BCB4264_A4402"/>
<dbReference type="HOGENOM" id="CLU_025885_4_1_9"/>
<dbReference type="Proteomes" id="UP000007096">
    <property type="component" value="Chromosome"/>
</dbReference>
<dbReference type="GO" id="GO:0008833">
    <property type="term" value="F:deoxyribonuclease IV (phage-T4-induced) activity"/>
    <property type="evidence" value="ECO:0007669"/>
    <property type="project" value="UniProtKB-UniRule"/>
</dbReference>
<dbReference type="GO" id="GO:0003677">
    <property type="term" value="F:DNA binding"/>
    <property type="evidence" value="ECO:0007669"/>
    <property type="project" value="InterPro"/>
</dbReference>
<dbReference type="GO" id="GO:0003906">
    <property type="term" value="F:DNA-(apurinic or apyrimidinic site) endonuclease activity"/>
    <property type="evidence" value="ECO:0007669"/>
    <property type="project" value="TreeGrafter"/>
</dbReference>
<dbReference type="GO" id="GO:0008081">
    <property type="term" value="F:phosphoric diester hydrolase activity"/>
    <property type="evidence" value="ECO:0007669"/>
    <property type="project" value="TreeGrafter"/>
</dbReference>
<dbReference type="GO" id="GO:0008270">
    <property type="term" value="F:zinc ion binding"/>
    <property type="evidence" value="ECO:0007669"/>
    <property type="project" value="UniProtKB-UniRule"/>
</dbReference>
<dbReference type="GO" id="GO:0006284">
    <property type="term" value="P:base-excision repair"/>
    <property type="evidence" value="ECO:0007669"/>
    <property type="project" value="TreeGrafter"/>
</dbReference>
<dbReference type="CDD" id="cd00019">
    <property type="entry name" value="AP2Ec"/>
    <property type="match status" value="1"/>
</dbReference>
<dbReference type="FunFam" id="3.20.20.150:FF:000001">
    <property type="entry name" value="Probable endonuclease 4"/>
    <property type="match status" value="1"/>
</dbReference>
<dbReference type="Gene3D" id="3.20.20.150">
    <property type="entry name" value="Divalent-metal-dependent TIM barrel enzymes"/>
    <property type="match status" value="1"/>
</dbReference>
<dbReference type="HAMAP" id="MF_00152">
    <property type="entry name" value="Nfo"/>
    <property type="match status" value="1"/>
</dbReference>
<dbReference type="InterPro" id="IPR001719">
    <property type="entry name" value="AP_endonuc_2"/>
</dbReference>
<dbReference type="InterPro" id="IPR018246">
    <property type="entry name" value="AP_endonuc_F2_Zn_BS"/>
</dbReference>
<dbReference type="InterPro" id="IPR036237">
    <property type="entry name" value="Xyl_isomerase-like_sf"/>
</dbReference>
<dbReference type="InterPro" id="IPR013022">
    <property type="entry name" value="Xyl_isomerase-like_TIM-brl"/>
</dbReference>
<dbReference type="NCBIfam" id="TIGR00587">
    <property type="entry name" value="nfo"/>
    <property type="match status" value="1"/>
</dbReference>
<dbReference type="NCBIfam" id="NF002196">
    <property type="entry name" value="PRK01060.1-1"/>
    <property type="match status" value="1"/>
</dbReference>
<dbReference type="PANTHER" id="PTHR21445:SF0">
    <property type="entry name" value="APURINIC-APYRIMIDINIC ENDONUCLEASE"/>
    <property type="match status" value="1"/>
</dbReference>
<dbReference type="PANTHER" id="PTHR21445">
    <property type="entry name" value="ENDONUCLEASE IV ENDODEOXYRIBONUCLEASE IV"/>
    <property type="match status" value="1"/>
</dbReference>
<dbReference type="Pfam" id="PF01261">
    <property type="entry name" value="AP_endonuc_2"/>
    <property type="match status" value="1"/>
</dbReference>
<dbReference type="SMART" id="SM00518">
    <property type="entry name" value="AP2Ec"/>
    <property type="match status" value="1"/>
</dbReference>
<dbReference type="SUPFAM" id="SSF51658">
    <property type="entry name" value="Xylose isomerase-like"/>
    <property type="match status" value="1"/>
</dbReference>
<dbReference type="PROSITE" id="PS00729">
    <property type="entry name" value="AP_NUCLEASE_F2_1"/>
    <property type="match status" value="1"/>
</dbReference>
<dbReference type="PROSITE" id="PS00730">
    <property type="entry name" value="AP_NUCLEASE_F2_2"/>
    <property type="match status" value="1"/>
</dbReference>
<dbReference type="PROSITE" id="PS00731">
    <property type="entry name" value="AP_NUCLEASE_F2_3"/>
    <property type="match status" value="1"/>
</dbReference>
<dbReference type="PROSITE" id="PS51432">
    <property type="entry name" value="AP_NUCLEASE_F2_4"/>
    <property type="match status" value="1"/>
</dbReference>
<name>END4_BACC4</name>
<comment type="function">
    <text evidence="1">Endonuclease IV plays a role in DNA repair. It cleaves phosphodiester bonds at apurinic or apyrimidinic (AP) sites, generating a 3'-hydroxyl group and a 5'-terminal sugar phosphate.</text>
</comment>
<comment type="catalytic activity">
    <reaction evidence="1">
        <text>Endonucleolytic cleavage to 5'-phosphooligonucleotide end-products.</text>
        <dbReference type="EC" id="3.1.21.2"/>
    </reaction>
</comment>
<comment type="cofactor">
    <cofactor evidence="1">
        <name>Zn(2+)</name>
        <dbReference type="ChEBI" id="CHEBI:29105"/>
    </cofactor>
    <text evidence="1">Binds 3 Zn(2+) ions.</text>
</comment>
<comment type="similarity">
    <text evidence="1">Belongs to the AP endonuclease 2 family.</text>
</comment>
<keyword id="KW-0227">DNA damage</keyword>
<keyword id="KW-0234">DNA repair</keyword>
<keyword id="KW-0255">Endonuclease</keyword>
<keyword id="KW-0378">Hydrolase</keyword>
<keyword id="KW-0479">Metal-binding</keyword>
<keyword id="KW-0540">Nuclease</keyword>
<keyword id="KW-0862">Zinc</keyword>
<organism>
    <name type="scientific">Bacillus cereus (strain B4264)</name>
    <dbReference type="NCBI Taxonomy" id="405532"/>
    <lineage>
        <taxon>Bacteria</taxon>
        <taxon>Bacillati</taxon>
        <taxon>Bacillota</taxon>
        <taxon>Bacilli</taxon>
        <taxon>Bacillales</taxon>
        <taxon>Bacillaceae</taxon>
        <taxon>Bacillus</taxon>
        <taxon>Bacillus cereus group</taxon>
    </lineage>
</organism>